<comment type="function">
    <text evidence="1">Involved in protein N-glycosylation. Essential for the second step of the dolichol-linked oligosaccharide pathway. Anchors the catalytic subunit ALG13 to the ER (By similarity).</text>
</comment>
<comment type="subunit">
    <text evidence="1">Heterodimer with ALG13 to form a functional enzyme.</text>
</comment>
<comment type="subcellular location">
    <subcellularLocation>
        <location evidence="2">Endoplasmic reticulum membrane</location>
        <topology evidence="3">Single-pass membrane protein</topology>
    </subcellularLocation>
    <subcellularLocation>
        <location evidence="2">Nucleus membrane</location>
        <topology evidence="3">Single-pass membrane protein</topology>
    </subcellularLocation>
</comment>
<comment type="similarity">
    <text evidence="4">Belongs to the ALG14 family.</text>
</comment>
<evidence type="ECO:0000250" key="1"/>
<evidence type="ECO:0000250" key="2">
    <source>
        <dbReference type="UniProtKB" id="P38242"/>
    </source>
</evidence>
<evidence type="ECO:0000255" key="3"/>
<evidence type="ECO:0000305" key="4"/>
<protein>
    <recommendedName>
        <fullName>UDP-N-acetylglucosamine transferase subunit ALG14</fullName>
    </recommendedName>
    <alternativeName>
        <fullName>Asparagine-linked glycosylation protein 14</fullName>
    </alternativeName>
</protein>
<sequence>MPFLSTAHLCALLLILGCFYIGRLIKVIPILRFACAGEAEIKPLFIQPKSNDGIHLFVFLGSGGHTGEMLRLLQNHQEVLLNKRNTFYIGYSDDDSKARFLSMVEKYDFKAERIHFYPFAKAREVNAGPIASIVTISKTLLTGFTNVLSIKMNTLGQPHLTLLNGPGTCCIINFWLKLLEWLIYIPYLSNGSNVVYIESLARIESLSLTGKILYLLADVFVVQWEELKVRKAPRSEYYGILV</sequence>
<gene>
    <name type="primary">ALG14</name>
    <name type="ordered locus">CAGL0E04180g</name>
</gene>
<organism>
    <name type="scientific">Candida glabrata (strain ATCC 2001 / BCRC 20586 / JCM 3761 / NBRC 0622 / NRRL Y-65 / CBS 138)</name>
    <name type="common">Yeast</name>
    <name type="synonym">Nakaseomyces glabratus</name>
    <dbReference type="NCBI Taxonomy" id="284593"/>
    <lineage>
        <taxon>Eukaryota</taxon>
        <taxon>Fungi</taxon>
        <taxon>Dikarya</taxon>
        <taxon>Ascomycota</taxon>
        <taxon>Saccharomycotina</taxon>
        <taxon>Saccharomycetes</taxon>
        <taxon>Saccharomycetales</taxon>
        <taxon>Saccharomycetaceae</taxon>
        <taxon>Nakaseomyces</taxon>
    </lineage>
</organism>
<reference key="1">
    <citation type="journal article" date="2004" name="Nature">
        <title>Genome evolution in yeasts.</title>
        <authorList>
            <person name="Dujon B."/>
            <person name="Sherman D."/>
            <person name="Fischer G."/>
            <person name="Durrens P."/>
            <person name="Casaregola S."/>
            <person name="Lafontaine I."/>
            <person name="de Montigny J."/>
            <person name="Marck C."/>
            <person name="Neuveglise C."/>
            <person name="Talla E."/>
            <person name="Goffard N."/>
            <person name="Frangeul L."/>
            <person name="Aigle M."/>
            <person name="Anthouard V."/>
            <person name="Babour A."/>
            <person name="Barbe V."/>
            <person name="Barnay S."/>
            <person name="Blanchin S."/>
            <person name="Beckerich J.-M."/>
            <person name="Beyne E."/>
            <person name="Bleykasten C."/>
            <person name="Boisrame A."/>
            <person name="Boyer J."/>
            <person name="Cattolico L."/>
            <person name="Confanioleri F."/>
            <person name="de Daruvar A."/>
            <person name="Despons L."/>
            <person name="Fabre E."/>
            <person name="Fairhead C."/>
            <person name="Ferry-Dumazet H."/>
            <person name="Groppi A."/>
            <person name="Hantraye F."/>
            <person name="Hennequin C."/>
            <person name="Jauniaux N."/>
            <person name="Joyet P."/>
            <person name="Kachouri R."/>
            <person name="Kerrest A."/>
            <person name="Koszul R."/>
            <person name="Lemaire M."/>
            <person name="Lesur I."/>
            <person name="Ma L."/>
            <person name="Muller H."/>
            <person name="Nicaud J.-M."/>
            <person name="Nikolski M."/>
            <person name="Oztas S."/>
            <person name="Ozier-Kalogeropoulos O."/>
            <person name="Pellenz S."/>
            <person name="Potier S."/>
            <person name="Richard G.-F."/>
            <person name="Straub M.-L."/>
            <person name="Suleau A."/>
            <person name="Swennen D."/>
            <person name="Tekaia F."/>
            <person name="Wesolowski-Louvel M."/>
            <person name="Westhof E."/>
            <person name="Wirth B."/>
            <person name="Zeniou-Meyer M."/>
            <person name="Zivanovic Y."/>
            <person name="Bolotin-Fukuhara M."/>
            <person name="Thierry A."/>
            <person name="Bouchier C."/>
            <person name="Caudron B."/>
            <person name="Scarpelli C."/>
            <person name="Gaillardin C."/>
            <person name="Weissenbach J."/>
            <person name="Wincker P."/>
            <person name="Souciet J.-L."/>
        </authorList>
    </citation>
    <scope>NUCLEOTIDE SEQUENCE [LARGE SCALE GENOMIC DNA]</scope>
    <source>
        <strain>ATCC 2001 / BCRC 20586 / JCM 3761 / NBRC 0622 / NRRL Y-65 / CBS 138</strain>
    </source>
</reference>
<name>ALG14_CANGA</name>
<dbReference type="EMBL" id="CR380951">
    <property type="protein sequence ID" value="CAG58788.1"/>
    <property type="molecule type" value="Genomic_DNA"/>
</dbReference>
<dbReference type="RefSeq" id="XP_445869.1">
    <property type="nucleotide sequence ID" value="XM_445869.1"/>
</dbReference>
<dbReference type="FunCoup" id="Q6FV75">
    <property type="interactions" value="333"/>
</dbReference>
<dbReference type="STRING" id="284593.Q6FV75"/>
<dbReference type="EnsemblFungi" id="CAGL0E04180g-T">
    <property type="protein sequence ID" value="CAGL0E04180g-T-p1"/>
    <property type="gene ID" value="CAGL0E04180g"/>
</dbReference>
<dbReference type="KEGG" id="cgr:2887310"/>
<dbReference type="CGD" id="CAL0128750">
    <property type="gene designation" value="CAGL0E04180g"/>
</dbReference>
<dbReference type="VEuPathDB" id="FungiDB:B1J91_E04180g"/>
<dbReference type="VEuPathDB" id="FungiDB:CAGL0E04180g"/>
<dbReference type="eggNOG" id="KOG3339">
    <property type="taxonomic scope" value="Eukaryota"/>
</dbReference>
<dbReference type="HOGENOM" id="CLU_064541_2_2_1"/>
<dbReference type="InParanoid" id="Q6FV75"/>
<dbReference type="OMA" id="GTCCIIT"/>
<dbReference type="Proteomes" id="UP000002428">
    <property type="component" value="Chromosome E"/>
</dbReference>
<dbReference type="GO" id="GO:0098548">
    <property type="term" value="C:cytoplasmic side of Golgi membrane"/>
    <property type="evidence" value="ECO:0007669"/>
    <property type="project" value="EnsemblFungi"/>
</dbReference>
<dbReference type="GO" id="GO:0005811">
    <property type="term" value="C:lipid droplet"/>
    <property type="evidence" value="ECO:0007669"/>
    <property type="project" value="EnsemblFungi"/>
</dbReference>
<dbReference type="GO" id="GO:0031965">
    <property type="term" value="C:nuclear membrane"/>
    <property type="evidence" value="ECO:0007669"/>
    <property type="project" value="UniProtKB-SubCell"/>
</dbReference>
<dbReference type="GO" id="GO:0043541">
    <property type="term" value="C:UDP-N-acetylglucosamine transferase complex"/>
    <property type="evidence" value="ECO:0007669"/>
    <property type="project" value="EnsemblFungi"/>
</dbReference>
<dbReference type="GO" id="GO:0004577">
    <property type="term" value="F:N-acetylglucosaminyldiphosphodolichol N-acetylglucosaminyltransferase activity"/>
    <property type="evidence" value="ECO:0007669"/>
    <property type="project" value="EnsemblFungi"/>
</dbReference>
<dbReference type="GO" id="GO:0043495">
    <property type="term" value="F:protein-membrane adaptor activity"/>
    <property type="evidence" value="ECO:0007669"/>
    <property type="project" value="EnsemblFungi"/>
</dbReference>
<dbReference type="GO" id="GO:0006488">
    <property type="term" value="P:dolichol-linked oligosaccharide biosynthetic process"/>
    <property type="evidence" value="ECO:0007669"/>
    <property type="project" value="EnsemblFungi"/>
</dbReference>
<dbReference type="Gene3D" id="3.40.50.2000">
    <property type="entry name" value="Glycogen Phosphorylase B"/>
    <property type="match status" value="1"/>
</dbReference>
<dbReference type="InterPro" id="IPR013969">
    <property type="entry name" value="Oligosacch_biosynth_Alg14"/>
</dbReference>
<dbReference type="PANTHER" id="PTHR12154">
    <property type="entry name" value="GLYCOSYL TRANSFERASE-RELATED"/>
    <property type="match status" value="1"/>
</dbReference>
<dbReference type="PANTHER" id="PTHR12154:SF4">
    <property type="entry name" value="UDP-N-ACETYLGLUCOSAMINE TRANSFERASE SUBUNIT ALG14 HOMOLOG"/>
    <property type="match status" value="1"/>
</dbReference>
<dbReference type="Pfam" id="PF08660">
    <property type="entry name" value="Alg14"/>
    <property type="match status" value="1"/>
</dbReference>
<keyword id="KW-0256">Endoplasmic reticulum</keyword>
<keyword id="KW-0472">Membrane</keyword>
<keyword id="KW-0539">Nucleus</keyword>
<keyword id="KW-1185">Reference proteome</keyword>
<keyword id="KW-0812">Transmembrane</keyword>
<keyword id="KW-1133">Transmembrane helix</keyword>
<feature type="chain" id="PRO_0000123812" description="UDP-N-acetylglucosamine transferase subunit ALG14">
    <location>
        <begin position="1"/>
        <end position="242"/>
    </location>
</feature>
<feature type="topological domain" description="Lumenal" evidence="2">
    <location>
        <begin position="1"/>
        <end position="6"/>
    </location>
</feature>
<feature type="transmembrane region" description="Helical" evidence="3">
    <location>
        <begin position="7"/>
        <end position="24"/>
    </location>
</feature>
<feature type="topological domain" description="Cytoplasmic" evidence="2">
    <location>
        <begin position="25"/>
        <end position="242"/>
    </location>
</feature>
<proteinExistence type="inferred from homology"/>
<accession>Q6FV75</accession>